<dbReference type="EMBL" id="AY280632">
    <property type="protein sequence ID" value="AAQ62069.1"/>
    <property type="molecule type" value="mRNA"/>
</dbReference>
<dbReference type="EMBL" id="BT062059">
    <property type="protein sequence ID" value="ACN26756.1"/>
    <property type="molecule type" value="mRNA"/>
</dbReference>
<dbReference type="RefSeq" id="NP_001105670.1">
    <molecule id="C0HIA3-2"/>
    <property type="nucleotide sequence ID" value="NM_001112200.1"/>
</dbReference>
<dbReference type="RefSeq" id="XP_008644292.1">
    <molecule id="C0HIA3-1"/>
    <property type="nucleotide sequence ID" value="XM_008646070.1"/>
</dbReference>
<dbReference type="SMR" id="C0HIA3"/>
<dbReference type="FunCoup" id="C0HIA3">
    <property type="interactions" value="2707"/>
</dbReference>
<dbReference type="STRING" id="4577.C0HIA3"/>
<dbReference type="PaxDb" id="4577-GRMZM2G095239_P01"/>
<dbReference type="EnsemblPlants" id="Zm00001eb218710_T005">
    <molecule id="C0HIA3-2"/>
    <property type="protein sequence ID" value="Zm00001eb218710_P005"/>
    <property type="gene ID" value="Zm00001eb218710"/>
</dbReference>
<dbReference type="GeneID" id="542683"/>
<dbReference type="Gramene" id="Zm00001eb218710_T005">
    <molecule id="C0HIA3-2"/>
    <property type="protein sequence ID" value="Zm00001eb218710_P005"/>
    <property type="gene ID" value="Zm00001eb218710"/>
</dbReference>
<dbReference type="KEGG" id="zma:542683"/>
<dbReference type="eggNOG" id="ENOG502QSU2">
    <property type="taxonomic scope" value="Eukaryota"/>
</dbReference>
<dbReference type="InParanoid" id="C0HIA3"/>
<dbReference type="OMA" id="KMRTMNA"/>
<dbReference type="OrthoDB" id="608866at2759"/>
<dbReference type="Proteomes" id="UP000007305">
    <property type="component" value="Chromosome 5"/>
</dbReference>
<dbReference type="ExpressionAtlas" id="C0HIA3">
    <property type="expression patterns" value="baseline and differential"/>
</dbReference>
<dbReference type="GO" id="GO:0000785">
    <property type="term" value="C:chromatin"/>
    <property type="evidence" value="ECO:0000250"/>
    <property type="project" value="UniProtKB"/>
</dbReference>
<dbReference type="GO" id="GO:0000781">
    <property type="term" value="C:chromosome, telomeric region"/>
    <property type="evidence" value="ECO:0007669"/>
    <property type="project" value="UniProtKB-SubCell"/>
</dbReference>
<dbReference type="GO" id="GO:0005730">
    <property type="term" value="C:nucleolus"/>
    <property type="evidence" value="ECO:0000250"/>
    <property type="project" value="UniProtKB"/>
</dbReference>
<dbReference type="GO" id="GO:0000786">
    <property type="term" value="C:nucleosome"/>
    <property type="evidence" value="ECO:0007669"/>
    <property type="project" value="InterPro"/>
</dbReference>
<dbReference type="GO" id="GO:0005634">
    <property type="term" value="C:nucleus"/>
    <property type="evidence" value="ECO:0000250"/>
    <property type="project" value="UniProtKB"/>
</dbReference>
<dbReference type="GO" id="GO:0003691">
    <property type="term" value="F:double-stranded telomeric DNA binding"/>
    <property type="evidence" value="ECO:0000250"/>
    <property type="project" value="UniProtKB"/>
</dbReference>
<dbReference type="GO" id="GO:0042803">
    <property type="term" value="F:protein homodimerization activity"/>
    <property type="evidence" value="ECO:0000250"/>
    <property type="project" value="UniProtKB"/>
</dbReference>
<dbReference type="GO" id="GO:0043047">
    <property type="term" value="F:single-stranded telomeric DNA binding"/>
    <property type="evidence" value="ECO:0000250"/>
    <property type="project" value="UniProtKB"/>
</dbReference>
<dbReference type="GO" id="GO:0006334">
    <property type="term" value="P:nucleosome assembly"/>
    <property type="evidence" value="ECO:0007669"/>
    <property type="project" value="InterPro"/>
</dbReference>
<dbReference type="CDD" id="cd11660">
    <property type="entry name" value="SANT_TRF"/>
    <property type="match status" value="1"/>
</dbReference>
<dbReference type="FunFam" id="1.10.10.10:FF:000498">
    <property type="entry name" value="Telomere repeat-binding factor 1"/>
    <property type="match status" value="1"/>
</dbReference>
<dbReference type="FunFam" id="1.10.10.60:FF:000168">
    <property type="entry name" value="Telomere repeat-binding factor 1"/>
    <property type="match status" value="1"/>
</dbReference>
<dbReference type="FunFam" id="1.10.246.220:FF:000002">
    <property type="entry name" value="Telomere repeat-binding factor 1"/>
    <property type="match status" value="1"/>
</dbReference>
<dbReference type="Gene3D" id="1.10.246.220">
    <property type="match status" value="1"/>
</dbReference>
<dbReference type="Gene3D" id="1.10.10.10">
    <property type="entry name" value="Winged helix-like DNA-binding domain superfamily/Winged helix DNA-binding domain"/>
    <property type="match status" value="1"/>
</dbReference>
<dbReference type="InterPro" id="IPR005818">
    <property type="entry name" value="Histone_H1/H5_H15"/>
</dbReference>
<dbReference type="InterPro" id="IPR009057">
    <property type="entry name" value="Homeodomain-like_sf"/>
</dbReference>
<dbReference type="InterPro" id="IPR017930">
    <property type="entry name" value="Myb_dom"/>
</dbReference>
<dbReference type="InterPro" id="IPR001005">
    <property type="entry name" value="SANT/Myb"/>
</dbReference>
<dbReference type="InterPro" id="IPR044597">
    <property type="entry name" value="SMH1-6"/>
</dbReference>
<dbReference type="InterPro" id="IPR036388">
    <property type="entry name" value="WH-like_DNA-bd_sf"/>
</dbReference>
<dbReference type="InterPro" id="IPR036390">
    <property type="entry name" value="WH_DNA-bd_sf"/>
</dbReference>
<dbReference type="PANTHER" id="PTHR46267">
    <property type="entry name" value="SINGLE MYB HISTONE 4"/>
    <property type="match status" value="1"/>
</dbReference>
<dbReference type="PANTHER" id="PTHR46267:SF8">
    <property type="entry name" value="TELOMERE REPEAT-BINDING FACTOR 1"/>
    <property type="match status" value="1"/>
</dbReference>
<dbReference type="Pfam" id="PF00538">
    <property type="entry name" value="Linker_histone"/>
    <property type="match status" value="1"/>
</dbReference>
<dbReference type="Pfam" id="PF00249">
    <property type="entry name" value="Myb_DNA-binding"/>
    <property type="match status" value="1"/>
</dbReference>
<dbReference type="SMART" id="SM00526">
    <property type="entry name" value="H15"/>
    <property type="match status" value="1"/>
</dbReference>
<dbReference type="SMART" id="SM00717">
    <property type="entry name" value="SANT"/>
    <property type="match status" value="1"/>
</dbReference>
<dbReference type="SUPFAM" id="SSF46689">
    <property type="entry name" value="Homeodomain-like"/>
    <property type="match status" value="1"/>
</dbReference>
<dbReference type="SUPFAM" id="SSF46785">
    <property type="entry name" value="Winged helix' DNA-binding domain"/>
    <property type="match status" value="1"/>
</dbReference>
<dbReference type="PROSITE" id="PS51504">
    <property type="entry name" value="H15"/>
    <property type="match status" value="1"/>
</dbReference>
<dbReference type="PROSITE" id="PS51294">
    <property type="entry name" value="HTH_MYB"/>
    <property type="match status" value="1"/>
</dbReference>
<protein>
    <recommendedName>
        <fullName>Single myb histone 6</fullName>
    </recommendedName>
    <alternativeName>
        <fullName>Protein SINGLE MYB HISTONE6</fullName>
    </alternativeName>
</protein>
<organism>
    <name type="scientific">Zea mays</name>
    <name type="common">Maize</name>
    <dbReference type="NCBI Taxonomy" id="4577"/>
    <lineage>
        <taxon>Eukaryota</taxon>
        <taxon>Viridiplantae</taxon>
        <taxon>Streptophyta</taxon>
        <taxon>Embryophyta</taxon>
        <taxon>Tracheophyta</taxon>
        <taxon>Spermatophyta</taxon>
        <taxon>Magnoliopsida</taxon>
        <taxon>Liliopsida</taxon>
        <taxon>Poales</taxon>
        <taxon>Poaceae</taxon>
        <taxon>PACMAD clade</taxon>
        <taxon>Panicoideae</taxon>
        <taxon>Andropogonodae</taxon>
        <taxon>Andropogoneae</taxon>
        <taxon>Tripsacinae</taxon>
        <taxon>Zea</taxon>
    </lineage>
</organism>
<comment type="function">
    <text evidence="1">Binds preferentially double-stranded telomeric repeats, but may also bind to the single telomeric strand.</text>
</comment>
<comment type="subunit">
    <text evidence="1">Forms a homodimer and heterodimers.</text>
</comment>
<comment type="subcellular location">
    <subcellularLocation>
        <location evidence="3 4">Nucleus</location>
    </subcellularLocation>
    <subcellularLocation>
        <location evidence="4">Chromosome</location>
    </subcellularLocation>
    <subcellularLocation>
        <location evidence="1">Nucleus</location>
        <location evidence="1">Nucleolus</location>
    </subcellularLocation>
    <subcellularLocation>
        <location evidence="6">Chromosome</location>
        <location evidence="6">Telomere</location>
    </subcellularLocation>
    <text evidence="1">Localized to the nucleolus during interphase.</text>
</comment>
<comment type="alternative products">
    <event type="alternative splicing"/>
    <isoform>
        <id>C0HIA3-1</id>
        <name>1</name>
        <sequence type="displayed"/>
    </isoform>
    <isoform>
        <id>C0HIA3-2</id>
        <name>2</name>
        <sequence type="described" ref="VSP_054626 VSP_054627"/>
    </isoform>
</comment>
<comment type="domain">
    <text evidence="1">HTH myb-type domain confers double-stranded telomeric DNA-binding while the H15 domain is involved in non-specific DNA-protein interaction and multimerization.</text>
</comment>
<comment type="similarity">
    <text evidence="4">Belongs to the histone H1/H5 family. SMH subfamily.</text>
</comment>
<proteinExistence type="evidence at transcript level"/>
<gene>
    <name type="primary">SMH6</name>
</gene>
<feature type="chain" id="PRO_0000429018" description="Single myb histone 6">
    <location>
        <begin position="1"/>
        <end position="317"/>
    </location>
</feature>
<feature type="domain" description="HTH myb-type" evidence="3">
    <location>
        <begin position="1"/>
        <end position="61"/>
    </location>
</feature>
<feature type="domain" description="H15" evidence="4">
    <location>
        <begin position="121"/>
        <end position="189"/>
    </location>
</feature>
<feature type="DNA-binding region" description="H-T-H motif" evidence="3">
    <location>
        <begin position="28"/>
        <end position="57"/>
    </location>
</feature>
<feature type="coiled-coil region" evidence="2">
    <location>
        <begin position="244"/>
        <end position="288"/>
    </location>
</feature>
<feature type="splice variant" id="VSP_054626" description="In isoform 2." evidence="5">
    <original>VI</original>
    <variation>MA</variation>
    <location>
        <begin position="297"/>
        <end position="298"/>
    </location>
</feature>
<feature type="splice variant" id="VSP_054627" description="In isoform 2." evidence="5">
    <location>
        <begin position="299"/>
        <end position="317"/>
    </location>
</feature>
<sequence length="317" mass="35174">MGAPKQRWTSEEEAALRAGIARHGVGKWRTILKDPEFSSTLCYRSNVDLKDKWRNMNVIVSTSSSRDKAKSALKRIRTIPKNNEHTMAITRVTSDIDDEIVDEKPIVSLPSEAKNTSSSKKSHRLDNIIMEAIKNLNEPTGSHRTTIANYIEEQYWPPSDFDHLLSAKLKDLSTSGKLIKVNRKYRIAPSSPNSERRSPKMPLLEDVQREPVKIWSDDTKTLTRSQVDAELARMATMTAEEASVAAARAVAEAEAIMAEAEAAAKEAEAAEAEAQAAQAFAEAAFLTLKNRNAGKLVIALIHASLCYILPCFISYHI</sequence>
<evidence type="ECO:0000250" key="1"/>
<evidence type="ECO:0000255" key="2"/>
<evidence type="ECO:0000255" key="3">
    <source>
        <dbReference type="PROSITE-ProRule" id="PRU00625"/>
    </source>
</evidence>
<evidence type="ECO:0000255" key="4">
    <source>
        <dbReference type="PROSITE-ProRule" id="PRU00837"/>
    </source>
</evidence>
<evidence type="ECO:0000303" key="5">
    <source>
    </source>
</evidence>
<evidence type="ECO:0000305" key="6"/>
<name>SMH6_MAIZE</name>
<accession>C0HIA3</accession>
<accession>Q6WLH1</accession>
<keyword id="KW-0025">Alternative splicing</keyword>
<keyword id="KW-0158">Chromosome</keyword>
<keyword id="KW-0175">Coiled coil</keyword>
<keyword id="KW-0238">DNA-binding</keyword>
<keyword id="KW-0539">Nucleus</keyword>
<keyword id="KW-1185">Reference proteome</keyword>
<keyword id="KW-0779">Telomere</keyword>
<keyword id="KW-0804">Transcription</keyword>
<keyword id="KW-0805">Transcription regulation</keyword>
<reference key="1">
    <citation type="journal article" date="2003" name="Plant Physiol.">
        <title>The maize Single myb histone 1 gene, Smh1, belongs to a novel gene family and encodes a protein that binds telomere DNA repeats in vitro.</title>
        <authorList>
            <person name="Marian C.O."/>
            <person name="Bordoli S.J."/>
            <person name="Goltz M."/>
            <person name="Santarella R.A."/>
            <person name="Jackson L.P."/>
            <person name="Danilevskaya O."/>
            <person name="Beckstette M."/>
            <person name="Meeley R."/>
            <person name="Bass H.W."/>
        </authorList>
    </citation>
    <scope>NUCLEOTIDE SEQUENCE [MRNA] (ISOFORM 2)</scope>
    <scope>GENE FAMILY</scope>
    <scope>NOMENCLATURE</scope>
    <source>
        <strain>cv. W23</strain>
    </source>
</reference>
<reference key="2">
    <citation type="journal article" date="2009" name="PLoS Genet.">
        <title>Sequencing, mapping, and analysis of 27,455 maize full-length cDNAs.</title>
        <authorList>
            <person name="Soderlund C."/>
            <person name="Descour A."/>
            <person name="Kudrna D."/>
            <person name="Bomhoff M."/>
            <person name="Boyd L."/>
            <person name="Currie J."/>
            <person name="Angelova A."/>
            <person name="Collura K."/>
            <person name="Wissotski M."/>
            <person name="Ashley E."/>
            <person name="Morrow D."/>
            <person name="Fernandes J."/>
            <person name="Walbot V."/>
            <person name="Yu Y."/>
        </authorList>
    </citation>
    <scope>NUCLEOTIDE SEQUENCE [LARGE SCALE MRNA] (ISOFORM 1)</scope>
    <source>
        <strain>cv. B73</strain>
    </source>
</reference>